<reference key="1">
    <citation type="journal article" date="2001" name="Mol. Cell. Biol.">
        <title>Cse1l is essential for early embryonic growth and development.</title>
        <authorList>
            <person name="Bera T.K."/>
            <person name="Bera J."/>
            <person name="Brinkmann U."/>
            <person name="Tessarollo L."/>
            <person name="Pastan I."/>
        </authorList>
    </citation>
    <scope>NUCLEOTIDE SEQUENCE [MRNA]</scope>
    <scope>DISRUPTION PHENOTYPE</scope>
    <source>
        <strain>BALB/cJ</strain>
    </source>
</reference>
<reference key="2">
    <citation type="journal article" date="2010" name="Cell">
        <title>A tissue-specific atlas of mouse protein phosphorylation and expression.</title>
        <authorList>
            <person name="Huttlin E.L."/>
            <person name="Jedrychowski M.P."/>
            <person name="Elias J.E."/>
            <person name="Goswami T."/>
            <person name="Rad R."/>
            <person name="Beausoleil S.A."/>
            <person name="Villen J."/>
            <person name="Haas W."/>
            <person name="Sowa M.E."/>
            <person name="Gygi S.P."/>
        </authorList>
    </citation>
    <scope>IDENTIFICATION BY MASS SPECTROMETRY [LARGE SCALE ANALYSIS]</scope>
    <source>
        <tissue>Brain</tissue>
        <tissue>Brown adipose tissue</tissue>
        <tissue>Heart</tissue>
        <tissue>Kidney</tissue>
        <tissue>Liver</tissue>
        <tissue>Lung</tissue>
        <tissue>Pancreas</tissue>
        <tissue>Spleen</tissue>
        <tissue>Testis</tissue>
    </source>
</reference>
<feature type="chain" id="PRO_0000117288" description="Exportin-2">
    <location>
        <begin position="1"/>
        <end position="971"/>
    </location>
</feature>
<feature type="domain" description="Importin N-terminal" evidence="2">
    <location>
        <begin position="29"/>
        <end position="102"/>
    </location>
</feature>
<feature type="modified residue" description="N-acetylmethionine" evidence="1">
    <location>
        <position position="1"/>
    </location>
</feature>
<feature type="modified residue" description="Phosphoserine" evidence="1">
    <location>
        <position position="112"/>
    </location>
</feature>
<feature type="modified residue" description="N6-acetyllysine" evidence="1">
    <location>
        <position position="574"/>
    </location>
</feature>
<feature type="modified residue" description="N6-acetyllysine" evidence="1">
    <location>
        <position position="824"/>
    </location>
</feature>
<feature type="modified residue" description="Phosphoserine" evidence="1">
    <location>
        <position position="931"/>
    </location>
</feature>
<sequence length="971" mass="110455">MELSDANLQTLTEYLKKTLDPDPAIRRPAEKFLESVEGNQNYPLLLLTLLEKSQDNVIKVCASVTFKNYIKRNWRIVEDEPNKICEADRVAIKANIVHLMLSSPEQIQKQLSDAISIIGREDFPQKWPDLLTEMVNRFQSGDFHVINGVLRTAHSLFKRYRHEFKSNELWTEIKLVLDAFALPLTNLFKATIELCSTHANDASALRILFSSLILISKLFYSLNFQDLPEFFEDNMETWMNNFHTLLTLDNKLLQTDDEEEAGLLELLKSQICDNAALYAQKYDEEFQRYLPRFVTAIWNLLVTTGREVKYDLLVSNAIQFLASVCERPHYKNLFEDQNTLTSICEKVIVPNMEFRAADEEAFEDNSEEYIRRDLEGSDIDTRRRAACDLVRGLCKFFEGPVTGIFSGYVNSMLQEYAKNPSVNWKHKDAAIYLVTSLASKAQTQKHGITQANELVNLTEFFVNHILPDLKSNNVNEFPVLKADGIKYIMIFRNQVPKEHLLVSIPLLISHLEAESIVVHTYAAHALERLFTMRGSNNTTLFTAAEIAPFVEILLTNLFKALTLPGSSENEYIMKAIMRSFSLLQEAIIPYIPTLITQLTQKLLAVSKNPSKPHFNHYMFEAICLSIRITCKANPAAVVNFEEALFLVFTEILQNDVQEFIPYVFQVMSLLLETHKNDIPSSYMALFPHLLQPVLWERTGNIPALVRLLQAFLERGSSTIATAAADKIPGLLGVFQKLIASKANDHQGFYLLNSIIEHMPPESVDQYRKQIFILLFQRLQNSKTTKFIKSFLVFINLYCIKYGALALQEIFDGIQPKMFGMVLEKIIIPEIQKVSGNVEKKICAVGITKLLTECPPMMDTEYTKLWTPLLQSLIGLFELPEDDSIPDEEHFIDIEDTPGYQTAFSQLAFAGKKEHDPVGQMVNNPKIHLAQSLHKLSTACPGRVPSMVSTSLNAEALQYLQGYLQAASVTLL</sequence>
<keyword id="KW-0007">Acetylation</keyword>
<keyword id="KW-0963">Cytoplasm</keyword>
<keyword id="KW-0539">Nucleus</keyword>
<keyword id="KW-0597">Phosphoprotein</keyword>
<keyword id="KW-0653">Protein transport</keyword>
<keyword id="KW-1185">Reference proteome</keyword>
<keyword id="KW-0813">Transport</keyword>
<comment type="function">
    <text evidence="1">Export receptor for importin-alpha. Mediates importin-alpha re-export from the nucleus to the cytoplasm after import substrates (cargos) have been released into the nucleoplasm. In the nucleus binds cooperatively to importin-alpha and to the GTPase Ran in its active GTP-bound form. Docking of this trimeric complex to the nuclear pore complex (NPC) is mediated through binding to nucleoporins. Upon transit of a nuclear export complex into the cytoplasm, disassembling of the complex and hydrolysis of Ran-GTP to Ran-GDP (induced by RANBP1 and RANGAP1, respectively) cause release of the importin-alpha from the export receptor. CSE1L/XPO2 then return to the nuclear compartment and mediate another round of transport. The directionality of nuclear export is thought to be conferred by an asymmetric distribution of the GTP- and GDP-bound forms of Ran between the cytoplasm and nucleus.</text>
</comment>
<comment type="subunit">
    <text evidence="1">Found in a complex with CSE1L/XPO2, Ran and KPNA2. Binds with high affinity to importin-alpha only in the presence of RanGTP. The complex is dissociated by the combined action of RanBP1 and RanGAP1. Interacts with CFTR.</text>
</comment>
<comment type="subcellular location">
    <subcellularLocation>
        <location evidence="1">Cytoplasm</location>
    </subcellularLocation>
    <subcellularLocation>
        <location evidence="1">Nucleus</location>
    </subcellularLocation>
    <text evidence="1">Shuttles between the nucleus and the cytoplasm.</text>
</comment>
<comment type="tissue specificity">
    <text evidence="3">Ubiquitous. Detected in embryos from 5 to 17 dpc. Highly expressed in adult testis, heart, brain, lung, liver, skeletal muscle, spleen and kidney.</text>
</comment>
<comment type="disruption phenotype">
    <text evidence="3">Complete embryonic lethality at around 5.5 dpc.</text>
</comment>
<comment type="similarity">
    <text evidence="4">Belongs to the XPO2/CSE1 family.</text>
</comment>
<dbReference type="EMBL" id="AF301152">
    <property type="protein sequence ID" value="AAG24636.1"/>
    <property type="molecule type" value="mRNA"/>
</dbReference>
<dbReference type="CCDS" id="CCDS17092.1"/>
<dbReference type="RefSeq" id="NP_076054.1">
    <property type="nucleotide sequence ID" value="NM_023565.3"/>
</dbReference>
<dbReference type="SMR" id="Q9ERK4"/>
<dbReference type="BioGRID" id="225874">
    <property type="interactions" value="37"/>
</dbReference>
<dbReference type="FunCoup" id="Q9ERK4">
    <property type="interactions" value="4145"/>
</dbReference>
<dbReference type="IntAct" id="Q9ERK4">
    <property type="interactions" value="7"/>
</dbReference>
<dbReference type="MINT" id="Q9ERK4"/>
<dbReference type="STRING" id="10090.ENSMUSP00000002790"/>
<dbReference type="GlyGen" id="Q9ERK4">
    <property type="glycosylation" value="1 site, 1 O-linked glycan (1 site)"/>
</dbReference>
<dbReference type="iPTMnet" id="Q9ERK4"/>
<dbReference type="PhosphoSitePlus" id="Q9ERK4"/>
<dbReference type="SwissPalm" id="Q9ERK4"/>
<dbReference type="jPOST" id="Q9ERK4"/>
<dbReference type="PaxDb" id="10090-ENSMUSP00000002790"/>
<dbReference type="PeptideAtlas" id="Q9ERK4"/>
<dbReference type="ProteomicsDB" id="300007"/>
<dbReference type="Pumba" id="Q9ERK4"/>
<dbReference type="Antibodypedia" id="28372">
    <property type="antibodies" value="555 antibodies from 40 providers"/>
</dbReference>
<dbReference type="DNASU" id="110750"/>
<dbReference type="Ensembl" id="ENSMUST00000002790.14">
    <property type="protein sequence ID" value="ENSMUSP00000002790.8"/>
    <property type="gene ID" value="ENSMUSG00000002718.15"/>
</dbReference>
<dbReference type="GeneID" id="110750"/>
<dbReference type="KEGG" id="mmu:110750"/>
<dbReference type="UCSC" id="uc008nys.2">
    <property type="organism name" value="mouse"/>
</dbReference>
<dbReference type="AGR" id="MGI:1339951"/>
<dbReference type="CTD" id="1434"/>
<dbReference type="MGI" id="MGI:1339951">
    <property type="gene designation" value="Cse1l"/>
</dbReference>
<dbReference type="VEuPathDB" id="HostDB:ENSMUSG00000002718"/>
<dbReference type="eggNOG" id="KOG1992">
    <property type="taxonomic scope" value="Eukaryota"/>
</dbReference>
<dbReference type="GeneTree" id="ENSGT00550000074884"/>
<dbReference type="HOGENOM" id="CLU_009614_0_0_1"/>
<dbReference type="InParanoid" id="Q9ERK4"/>
<dbReference type="OMA" id="AENEFLM"/>
<dbReference type="OrthoDB" id="3268246at2759"/>
<dbReference type="PhylomeDB" id="Q9ERK4"/>
<dbReference type="TreeFam" id="TF300473"/>
<dbReference type="BioGRID-ORCS" id="110750">
    <property type="hits" value="30 hits in 74 CRISPR screens"/>
</dbReference>
<dbReference type="ChiTaRS" id="Cse1l">
    <property type="organism name" value="mouse"/>
</dbReference>
<dbReference type="PRO" id="PR:Q9ERK4"/>
<dbReference type="Proteomes" id="UP000000589">
    <property type="component" value="Chromosome 2"/>
</dbReference>
<dbReference type="RNAct" id="Q9ERK4">
    <property type="molecule type" value="protein"/>
</dbReference>
<dbReference type="Bgee" id="ENSMUSG00000002718">
    <property type="expression patterns" value="Expressed in embryonic post-anal tail and 91 other cell types or tissues"/>
</dbReference>
<dbReference type="ExpressionAtlas" id="Q9ERK4">
    <property type="expression patterns" value="baseline and differential"/>
</dbReference>
<dbReference type="GO" id="GO:0005829">
    <property type="term" value="C:cytosol"/>
    <property type="evidence" value="ECO:0007669"/>
    <property type="project" value="Ensembl"/>
</dbReference>
<dbReference type="GO" id="GO:0005654">
    <property type="term" value="C:nucleoplasm"/>
    <property type="evidence" value="ECO:0007669"/>
    <property type="project" value="Ensembl"/>
</dbReference>
<dbReference type="GO" id="GO:0031267">
    <property type="term" value="F:small GTPase binding"/>
    <property type="evidence" value="ECO:0007669"/>
    <property type="project" value="InterPro"/>
</dbReference>
<dbReference type="GO" id="GO:0006886">
    <property type="term" value="P:intracellular protein transport"/>
    <property type="evidence" value="ECO:0007669"/>
    <property type="project" value="InterPro"/>
</dbReference>
<dbReference type="GO" id="GO:0006913">
    <property type="term" value="P:nucleocytoplasmic transport"/>
    <property type="evidence" value="ECO:0007669"/>
    <property type="project" value="UniProtKB-ARBA"/>
</dbReference>
<dbReference type="FunFam" id="1.25.10.10:FF:000057">
    <property type="entry name" value="Exportin-2 isoform 1"/>
    <property type="match status" value="1"/>
</dbReference>
<dbReference type="Gene3D" id="1.25.10.10">
    <property type="entry name" value="Leucine-rich Repeat Variant"/>
    <property type="match status" value="1"/>
</dbReference>
<dbReference type="InterPro" id="IPR011989">
    <property type="entry name" value="ARM-like"/>
</dbReference>
<dbReference type="InterPro" id="IPR016024">
    <property type="entry name" value="ARM-type_fold"/>
</dbReference>
<dbReference type="InterPro" id="IPR001494">
    <property type="entry name" value="Importin-beta_N"/>
</dbReference>
<dbReference type="InterPro" id="IPR005043">
    <property type="entry name" value="XPO2_C"/>
</dbReference>
<dbReference type="InterPro" id="IPR013713">
    <property type="entry name" value="XPO2_central"/>
</dbReference>
<dbReference type="PANTHER" id="PTHR10997:SF8">
    <property type="entry name" value="EXPORTIN-2"/>
    <property type="match status" value="1"/>
</dbReference>
<dbReference type="PANTHER" id="PTHR10997">
    <property type="entry name" value="IMPORTIN-7, 8, 11"/>
    <property type="match status" value="1"/>
</dbReference>
<dbReference type="Pfam" id="PF03378">
    <property type="entry name" value="CAS_CSE1"/>
    <property type="match status" value="1"/>
</dbReference>
<dbReference type="Pfam" id="PF08506">
    <property type="entry name" value="Cse1"/>
    <property type="match status" value="1"/>
</dbReference>
<dbReference type="Pfam" id="PF03810">
    <property type="entry name" value="IBN_N"/>
    <property type="match status" value="1"/>
</dbReference>
<dbReference type="SMART" id="SM00913">
    <property type="entry name" value="IBN_N"/>
    <property type="match status" value="1"/>
</dbReference>
<dbReference type="SUPFAM" id="SSF48371">
    <property type="entry name" value="ARM repeat"/>
    <property type="match status" value="1"/>
</dbReference>
<dbReference type="PROSITE" id="PS50166">
    <property type="entry name" value="IMPORTIN_B_NT"/>
    <property type="match status" value="1"/>
</dbReference>
<name>XPO2_MOUSE</name>
<accession>Q9ERK4</accession>
<proteinExistence type="evidence at protein level"/>
<evidence type="ECO:0000250" key="1">
    <source>
        <dbReference type="UniProtKB" id="P55060"/>
    </source>
</evidence>
<evidence type="ECO:0000255" key="2">
    <source>
        <dbReference type="PROSITE-ProRule" id="PRU00115"/>
    </source>
</evidence>
<evidence type="ECO:0000269" key="3">
    <source>
    </source>
</evidence>
<evidence type="ECO:0000305" key="4"/>
<organism>
    <name type="scientific">Mus musculus</name>
    <name type="common">Mouse</name>
    <dbReference type="NCBI Taxonomy" id="10090"/>
    <lineage>
        <taxon>Eukaryota</taxon>
        <taxon>Metazoa</taxon>
        <taxon>Chordata</taxon>
        <taxon>Craniata</taxon>
        <taxon>Vertebrata</taxon>
        <taxon>Euteleostomi</taxon>
        <taxon>Mammalia</taxon>
        <taxon>Eutheria</taxon>
        <taxon>Euarchontoglires</taxon>
        <taxon>Glires</taxon>
        <taxon>Rodentia</taxon>
        <taxon>Myomorpha</taxon>
        <taxon>Muroidea</taxon>
        <taxon>Muridae</taxon>
        <taxon>Murinae</taxon>
        <taxon>Mus</taxon>
        <taxon>Mus</taxon>
    </lineage>
</organism>
<protein>
    <recommendedName>
        <fullName>Exportin-2</fullName>
        <shortName>Exp2</shortName>
    </recommendedName>
    <alternativeName>
        <fullName>Chromosome segregation 1-like protein</fullName>
    </alternativeName>
    <alternativeName>
        <fullName>Importin-alpha re-exporter</fullName>
    </alternativeName>
</protein>
<gene>
    <name type="primary">Cse1l</name>
    <name type="synonym">Xpo2</name>
</gene>